<proteinExistence type="inferred from homology"/>
<organism>
    <name type="scientific">Anaeromyxobacter sp. (strain Fw109-5)</name>
    <dbReference type="NCBI Taxonomy" id="404589"/>
    <lineage>
        <taxon>Bacteria</taxon>
        <taxon>Pseudomonadati</taxon>
        <taxon>Myxococcota</taxon>
        <taxon>Myxococcia</taxon>
        <taxon>Myxococcales</taxon>
        <taxon>Cystobacterineae</taxon>
        <taxon>Anaeromyxobacteraceae</taxon>
        <taxon>Anaeromyxobacter</taxon>
    </lineage>
</organism>
<sequence>MATPNAQSGKITQVIGPVVDVEFPPGALPDIYTALSVTNPAIDARADNLVIEVSQHLGENTARCIAMDSTDGLVRGMVVRDTGAPISVPVGKEVLGRILNVVGDPVDERGPVASVRKFPIHRPAPTLVDQNVKIEAFETGIKVIDLLAPYLRGGKIGLFGGAGVGKTVLLMELVNNVAKKRGGFSVFAGVGERTREGNDLYHEMIESGVINKDDLSKSQCVLVYGQMNEPPGARARVALSALAIAEYFRDEEKRDMLLFIDNIFRFTQAGSEVSALLGRIPSAVGYQPTLSTEMGELQERITSTKNGAITSVQAIYVPADDLTDPAPATAFAHLDATTVLSRKLTEIGIYPAVDPLDSTSRILDPLVVGAEHYQVAREVQETLQRYKDLQDIIAILGMDELSEDDKLTVARARKVQRFLSQPFHVAEQFTGNPGKYVELADTIRGFKEIVEGKHDDLPEQAFYMVGGIEEAVEKAKKLAAG</sequence>
<keyword id="KW-0066">ATP synthesis</keyword>
<keyword id="KW-0067">ATP-binding</keyword>
<keyword id="KW-0997">Cell inner membrane</keyword>
<keyword id="KW-1003">Cell membrane</keyword>
<keyword id="KW-0139">CF(1)</keyword>
<keyword id="KW-0375">Hydrogen ion transport</keyword>
<keyword id="KW-0406">Ion transport</keyword>
<keyword id="KW-0472">Membrane</keyword>
<keyword id="KW-0547">Nucleotide-binding</keyword>
<keyword id="KW-1185">Reference proteome</keyword>
<keyword id="KW-1278">Translocase</keyword>
<keyword id="KW-0813">Transport</keyword>
<feature type="chain" id="PRO_0000339473" description="ATP synthase subunit beta">
    <location>
        <begin position="1"/>
        <end position="481"/>
    </location>
</feature>
<feature type="binding site" evidence="1">
    <location>
        <begin position="160"/>
        <end position="167"/>
    </location>
    <ligand>
        <name>ATP</name>
        <dbReference type="ChEBI" id="CHEBI:30616"/>
    </ligand>
</feature>
<comment type="function">
    <text evidence="1">Produces ATP from ADP in the presence of a proton gradient across the membrane. The catalytic sites are hosted primarily by the beta subunits.</text>
</comment>
<comment type="catalytic activity">
    <reaction evidence="1">
        <text>ATP + H2O + 4 H(+)(in) = ADP + phosphate + 5 H(+)(out)</text>
        <dbReference type="Rhea" id="RHEA:57720"/>
        <dbReference type="ChEBI" id="CHEBI:15377"/>
        <dbReference type="ChEBI" id="CHEBI:15378"/>
        <dbReference type="ChEBI" id="CHEBI:30616"/>
        <dbReference type="ChEBI" id="CHEBI:43474"/>
        <dbReference type="ChEBI" id="CHEBI:456216"/>
        <dbReference type="EC" id="7.1.2.2"/>
    </reaction>
</comment>
<comment type="subunit">
    <text evidence="1">F-type ATPases have 2 components, CF(1) - the catalytic core - and CF(0) - the membrane proton channel. CF(1) has five subunits: alpha(3), beta(3), gamma(1), delta(1), epsilon(1). CF(0) has three main subunits: a(1), b(2) and c(9-12). The alpha and beta chains form an alternating ring which encloses part of the gamma chain. CF(1) is attached to CF(0) by a central stalk formed by the gamma and epsilon chains, while a peripheral stalk is formed by the delta and b chains.</text>
</comment>
<comment type="subcellular location">
    <subcellularLocation>
        <location evidence="1">Cell inner membrane</location>
        <topology evidence="1">Peripheral membrane protein</topology>
    </subcellularLocation>
</comment>
<comment type="similarity">
    <text evidence="1">Belongs to the ATPase alpha/beta chains family.</text>
</comment>
<protein>
    <recommendedName>
        <fullName evidence="1">ATP synthase subunit beta</fullName>
        <ecNumber evidence="1">7.1.2.2</ecNumber>
    </recommendedName>
    <alternativeName>
        <fullName evidence="1">ATP synthase F1 sector subunit beta</fullName>
    </alternativeName>
    <alternativeName>
        <fullName evidence="1">F-ATPase subunit beta</fullName>
    </alternativeName>
</protein>
<accession>A7HIX7</accession>
<gene>
    <name evidence="1" type="primary">atpD</name>
    <name type="ordered locus">Anae109_4495</name>
</gene>
<evidence type="ECO:0000255" key="1">
    <source>
        <dbReference type="HAMAP-Rule" id="MF_01347"/>
    </source>
</evidence>
<reference key="1">
    <citation type="journal article" date="2015" name="Genome Announc.">
        <title>Complete genome sequence of Anaeromyxobacter sp. Fw109-5, an anaerobic, metal-reducing bacterium isolated from a contaminated subsurface environment.</title>
        <authorList>
            <person name="Hwang C."/>
            <person name="Copeland A."/>
            <person name="Lucas S."/>
            <person name="Lapidus A."/>
            <person name="Barry K."/>
            <person name="Glavina Del Rio T."/>
            <person name="Dalin E."/>
            <person name="Tice H."/>
            <person name="Pitluck S."/>
            <person name="Sims D."/>
            <person name="Brettin T."/>
            <person name="Bruce D.C."/>
            <person name="Detter J.C."/>
            <person name="Han C.S."/>
            <person name="Schmutz J."/>
            <person name="Larimer F.W."/>
            <person name="Land M.L."/>
            <person name="Hauser L.J."/>
            <person name="Kyrpides N."/>
            <person name="Lykidis A."/>
            <person name="Richardson P."/>
            <person name="Belieav A."/>
            <person name="Sanford R.A."/>
            <person name="Loeffler F.E."/>
            <person name="Fields M.W."/>
        </authorList>
    </citation>
    <scope>NUCLEOTIDE SEQUENCE [LARGE SCALE GENOMIC DNA]</scope>
    <source>
        <strain>Fw109-5</strain>
    </source>
</reference>
<name>ATPB_ANADF</name>
<dbReference type="EC" id="7.1.2.2" evidence="1"/>
<dbReference type="EMBL" id="CP000769">
    <property type="protein sequence ID" value="ABS28673.1"/>
    <property type="molecule type" value="Genomic_DNA"/>
</dbReference>
<dbReference type="RefSeq" id="WP_012099323.1">
    <property type="nucleotide sequence ID" value="NC_009675.1"/>
</dbReference>
<dbReference type="SMR" id="A7HIX7"/>
<dbReference type="STRING" id="404589.Anae109_4495"/>
<dbReference type="KEGG" id="afw:Anae109_4495"/>
<dbReference type="eggNOG" id="COG0055">
    <property type="taxonomic scope" value="Bacteria"/>
</dbReference>
<dbReference type="HOGENOM" id="CLU_022398_0_2_7"/>
<dbReference type="OrthoDB" id="9801639at2"/>
<dbReference type="Proteomes" id="UP000006382">
    <property type="component" value="Chromosome"/>
</dbReference>
<dbReference type="GO" id="GO:0005886">
    <property type="term" value="C:plasma membrane"/>
    <property type="evidence" value="ECO:0007669"/>
    <property type="project" value="UniProtKB-SubCell"/>
</dbReference>
<dbReference type="GO" id="GO:0045259">
    <property type="term" value="C:proton-transporting ATP synthase complex"/>
    <property type="evidence" value="ECO:0007669"/>
    <property type="project" value="UniProtKB-KW"/>
</dbReference>
<dbReference type="GO" id="GO:0005524">
    <property type="term" value="F:ATP binding"/>
    <property type="evidence" value="ECO:0007669"/>
    <property type="project" value="UniProtKB-UniRule"/>
</dbReference>
<dbReference type="GO" id="GO:0016887">
    <property type="term" value="F:ATP hydrolysis activity"/>
    <property type="evidence" value="ECO:0007669"/>
    <property type="project" value="InterPro"/>
</dbReference>
<dbReference type="GO" id="GO:0046933">
    <property type="term" value="F:proton-transporting ATP synthase activity, rotational mechanism"/>
    <property type="evidence" value="ECO:0007669"/>
    <property type="project" value="UniProtKB-UniRule"/>
</dbReference>
<dbReference type="CDD" id="cd18110">
    <property type="entry name" value="ATP-synt_F1_beta_C"/>
    <property type="match status" value="1"/>
</dbReference>
<dbReference type="CDD" id="cd18115">
    <property type="entry name" value="ATP-synt_F1_beta_N"/>
    <property type="match status" value="1"/>
</dbReference>
<dbReference type="CDD" id="cd01133">
    <property type="entry name" value="F1-ATPase_beta_CD"/>
    <property type="match status" value="1"/>
</dbReference>
<dbReference type="FunFam" id="1.10.1140.10:FF:000001">
    <property type="entry name" value="ATP synthase subunit beta"/>
    <property type="match status" value="1"/>
</dbReference>
<dbReference type="FunFam" id="2.40.10.170:FF:000005">
    <property type="entry name" value="ATP synthase subunit beta"/>
    <property type="match status" value="1"/>
</dbReference>
<dbReference type="FunFam" id="3.40.50.300:FF:000026">
    <property type="entry name" value="ATP synthase subunit beta"/>
    <property type="match status" value="1"/>
</dbReference>
<dbReference type="Gene3D" id="2.40.10.170">
    <property type="match status" value="1"/>
</dbReference>
<dbReference type="Gene3D" id="1.10.1140.10">
    <property type="entry name" value="Bovine Mitochondrial F1-atpase, Atp Synthase Beta Chain, Chain D, domain 3"/>
    <property type="match status" value="1"/>
</dbReference>
<dbReference type="Gene3D" id="3.40.50.300">
    <property type="entry name" value="P-loop containing nucleotide triphosphate hydrolases"/>
    <property type="match status" value="1"/>
</dbReference>
<dbReference type="HAMAP" id="MF_01347">
    <property type="entry name" value="ATP_synth_beta_bact"/>
    <property type="match status" value="1"/>
</dbReference>
<dbReference type="InterPro" id="IPR003593">
    <property type="entry name" value="AAA+_ATPase"/>
</dbReference>
<dbReference type="InterPro" id="IPR055190">
    <property type="entry name" value="ATP-synt_VA_C"/>
</dbReference>
<dbReference type="InterPro" id="IPR005722">
    <property type="entry name" value="ATP_synth_F1_bsu"/>
</dbReference>
<dbReference type="InterPro" id="IPR020003">
    <property type="entry name" value="ATPase_a/bsu_AS"/>
</dbReference>
<dbReference type="InterPro" id="IPR050053">
    <property type="entry name" value="ATPase_alpha/beta_chains"/>
</dbReference>
<dbReference type="InterPro" id="IPR004100">
    <property type="entry name" value="ATPase_F1/V1/A1_a/bsu_N"/>
</dbReference>
<dbReference type="InterPro" id="IPR036121">
    <property type="entry name" value="ATPase_F1/V1/A1_a/bsu_N_sf"/>
</dbReference>
<dbReference type="InterPro" id="IPR000194">
    <property type="entry name" value="ATPase_F1/V1/A1_a/bsu_nucl-bd"/>
</dbReference>
<dbReference type="InterPro" id="IPR024034">
    <property type="entry name" value="ATPase_F1/V1_b/a_C"/>
</dbReference>
<dbReference type="InterPro" id="IPR027417">
    <property type="entry name" value="P-loop_NTPase"/>
</dbReference>
<dbReference type="NCBIfam" id="TIGR01039">
    <property type="entry name" value="atpD"/>
    <property type="match status" value="1"/>
</dbReference>
<dbReference type="PANTHER" id="PTHR15184">
    <property type="entry name" value="ATP SYNTHASE"/>
    <property type="match status" value="1"/>
</dbReference>
<dbReference type="PANTHER" id="PTHR15184:SF71">
    <property type="entry name" value="ATP SYNTHASE SUBUNIT BETA, MITOCHONDRIAL"/>
    <property type="match status" value="1"/>
</dbReference>
<dbReference type="Pfam" id="PF00006">
    <property type="entry name" value="ATP-synt_ab"/>
    <property type="match status" value="1"/>
</dbReference>
<dbReference type="Pfam" id="PF02874">
    <property type="entry name" value="ATP-synt_ab_N"/>
    <property type="match status" value="1"/>
</dbReference>
<dbReference type="Pfam" id="PF22919">
    <property type="entry name" value="ATP-synt_VA_C"/>
    <property type="match status" value="1"/>
</dbReference>
<dbReference type="PIRSF" id="PIRSF039072">
    <property type="entry name" value="ATPase_subunit_beta"/>
    <property type="match status" value="1"/>
</dbReference>
<dbReference type="SMART" id="SM00382">
    <property type="entry name" value="AAA"/>
    <property type="match status" value="1"/>
</dbReference>
<dbReference type="SUPFAM" id="SSF47917">
    <property type="entry name" value="C-terminal domain of alpha and beta subunits of F1 ATP synthase"/>
    <property type="match status" value="1"/>
</dbReference>
<dbReference type="SUPFAM" id="SSF50615">
    <property type="entry name" value="N-terminal domain of alpha and beta subunits of F1 ATP synthase"/>
    <property type="match status" value="1"/>
</dbReference>
<dbReference type="SUPFAM" id="SSF52540">
    <property type="entry name" value="P-loop containing nucleoside triphosphate hydrolases"/>
    <property type="match status" value="1"/>
</dbReference>
<dbReference type="PROSITE" id="PS00152">
    <property type="entry name" value="ATPASE_ALPHA_BETA"/>
    <property type="match status" value="1"/>
</dbReference>